<dbReference type="EC" id="3.1.2.-" evidence="1"/>
<dbReference type="EC" id="3.5.1.-" evidence="1"/>
<dbReference type="EC" id="3.5.1.124" evidence="1"/>
<dbReference type="EMBL" id="AB015652">
    <property type="protein sequence ID" value="BAA29063.2"/>
    <property type="molecule type" value="mRNA"/>
</dbReference>
<dbReference type="EMBL" id="AK146368">
    <property type="protein sequence ID" value="BAE27118.1"/>
    <property type="molecule type" value="mRNA"/>
</dbReference>
<dbReference type="EMBL" id="AK153948">
    <property type="protein sequence ID" value="BAE32271.1"/>
    <property type="molecule type" value="mRNA"/>
</dbReference>
<dbReference type="EMBL" id="AK168341">
    <property type="protein sequence ID" value="BAE40278.1"/>
    <property type="molecule type" value="mRNA"/>
</dbReference>
<dbReference type="EMBL" id="AL607084">
    <property type="status" value="NOT_ANNOTATED_CDS"/>
    <property type="molecule type" value="Genomic_DNA"/>
</dbReference>
<dbReference type="EMBL" id="BC002187">
    <property type="protein sequence ID" value="AAH02187.1"/>
    <property type="molecule type" value="mRNA"/>
</dbReference>
<dbReference type="CCDS" id="CCDS18975.1"/>
<dbReference type="RefSeq" id="NP_065594.2">
    <property type="nucleotide sequence ID" value="NM_020569.3"/>
</dbReference>
<dbReference type="SMR" id="Q99LX0"/>
<dbReference type="BioGRID" id="208257">
    <property type="interactions" value="54"/>
</dbReference>
<dbReference type="FunCoup" id="Q99LX0">
    <property type="interactions" value="1515"/>
</dbReference>
<dbReference type="IntAct" id="Q99LX0">
    <property type="interactions" value="25"/>
</dbReference>
<dbReference type="MINT" id="Q99LX0"/>
<dbReference type="STRING" id="10090.ENSMUSP00000101299"/>
<dbReference type="MEROPS" id="C56.002"/>
<dbReference type="GlyGen" id="Q99LX0">
    <property type="glycosylation" value="3 sites, 2 N-linked glycans (2 sites), 1 O-linked glycan (1 site)"/>
</dbReference>
<dbReference type="iPTMnet" id="Q99LX0"/>
<dbReference type="MetOSite" id="Q99LX0"/>
<dbReference type="PhosphoSitePlus" id="Q99LX0"/>
<dbReference type="SwissPalm" id="Q99LX0"/>
<dbReference type="REPRODUCTION-2DPAGE" id="Q99LX0"/>
<dbReference type="CPTAC" id="non-CPTAC-3991"/>
<dbReference type="jPOST" id="Q99LX0"/>
<dbReference type="PaxDb" id="10090-ENSMUSP00000030805"/>
<dbReference type="PeptideAtlas" id="Q99LX0"/>
<dbReference type="ProteomicsDB" id="294387"/>
<dbReference type="Pumba" id="Q99LX0"/>
<dbReference type="TopDownProteomics" id="Q99LX0"/>
<dbReference type="Antibodypedia" id="1372">
    <property type="antibodies" value="899 antibodies from 51 providers"/>
</dbReference>
<dbReference type="DNASU" id="57320"/>
<dbReference type="Ensembl" id="ENSMUST00000030805.14">
    <property type="protein sequence ID" value="ENSMUSP00000030805.8"/>
    <property type="gene ID" value="ENSMUSG00000028964.15"/>
</dbReference>
<dbReference type="Ensembl" id="ENSMUST00000105673.8">
    <property type="protein sequence ID" value="ENSMUSP00000101298.2"/>
    <property type="gene ID" value="ENSMUSG00000028964.15"/>
</dbReference>
<dbReference type="Ensembl" id="ENSMUST00000105674.8">
    <property type="protein sequence ID" value="ENSMUSP00000101299.2"/>
    <property type="gene ID" value="ENSMUSG00000028964.15"/>
</dbReference>
<dbReference type="Ensembl" id="ENSMUST00000105675.8">
    <property type="protein sequence ID" value="ENSMUSP00000101300.2"/>
    <property type="gene ID" value="ENSMUSG00000028964.15"/>
</dbReference>
<dbReference type="GeneID" id="57320"/>
<dbReference type="KEGG" id="mmu:57320"/>
<dbReference type="UCSC" id="uc008vxz.2">
    <property type="organism name" value="mouse"/>
</dbReference>
<dbReference type="AGR" id="MGI:2135637"/>
<dbReference type="CTD" id="11315"/>
<dbReference type="MGI" id="MGI:2135637">
    <property type="gene designation" value="Park7"/>
</dbReference>
<dbReference type="VEuPathDB" id="HostDB:ENSMUSG00000028964"/>
<dbReference type="eggNOG" id="KOG2764">
    <property type="taxonomic scope" value="Eukaryota"/>
</dbReference>
<dbReference type="GeneTree" id="ENSGT00390000001231"/>
<dbReference type="HOGENOM" id="CLU_000445_44_2_1"/>
<dbReference type="InParanoid" id="Q99LX0"/>
<dbReference type="OMA" id="KATCYPG"/>
<dbReference type="OrthoDB" id="543156at2759"/>
<dbReference type="PhylomeDB" id="Q99LX0"/>
<dbReference type="TreeFam" id="TF300119"/>
<dbReference type="Reactome" id="R-MMU-3899300">
    <property type="pathway name" value="SUMOylation of transcription cofactors"/>
</dbReference>
<dbReference type="Reactome" id="R-MMU-9646399">
    <property type="pathway name" value="Aggrephagy"/>
</dbReference>
<dbReference type="BioGRID-ORCS" id="57320">
    <property type="hits" value="2 hits in 114 CRISPR screens"/>
</dbReference>
<dbReference type="ChiTaRS" id="Park7">
    <property type="organism name" value="mouse"/>
</dbReference>
<dbReference type="PRO" id="PR:Q99LX0"/>
<dbReference type="Proteomes" id="UP000000589">
    <property type="component" value="Chromosome 4"/>
</dbReference>
<dbReference type="RNAct" id="Q99LX0">
    <property type="molecule type" value="protein"/>
</dbReference>
<dbReference type="Bgee" id="ENSMUSG00000028964">
    <property type="expression patterns" value="Expressed in triceps brachii and 265 other cell types or tissues"/>
</dbReference>
<dbReference type="ExpressionAtlas" id="Q99LX0">
    <property type="expression patterns" value="baseline and differential"/>
</dbReference>
<dbReference type="GO" id="GO:0044297">
    <property type="term" value="C:cell body"/>
    <property type="evidence" value="ECO:0000314"/>
    <property type="project" value="ParkinsonsUK-UCL"/>
</dbReference>
<dbReference type="GO" id="GO:0000785">
    <property type="term" value="C:chromatin"/>
    <property type="evidence" value="ECO:0007669"/>
    <property type="project" value="Ensembl"/>
</dbReference>
<dbReference type="GO" id="GO:0005737">
    <property type="term" value="C:cytoplasm"/>
    <property type="evidence" value="ECO:0000250"/>
    <property type="project" value="UniProtKB"/>
</dbReference>
<dbReference type="GO" id="GO:0005829">
    <property type="term" value="C:cytosol"/>
    <property type="evidence" value="ECO:0000314"/>
    <property type="project" value="ParkinsonsUK-UCL"/>
</dbReference>
<dbReference type="GO" id="GO:0005783">
    <property type="term" value="C:endoplasmic reticulum"/>
    <property type="evidence" value="ECO:0000314"/>
    <property type="project" value="UniProtKB"/>
</dbReference>
<dbReference type="GO" id="GO:0045121">
    <property type="term" value="C:membrane raft"/>
    <property type="evidence" value="ECO:0007669"/>
    <property type="project" value="UniProtKB-SubCell"/>
</dbReference>
<dbReference type="GO" id="GO:0005758">
    <property type="term" value="C:mitochondrial intermembrane space"/>
    <property type="evidence" value="ECO:0000314"/>
    <property type="project" value="ParkinsonsUK-UCL"/>
</dbReference>
<dbReference type="GO" id="GO:0005759">
    <property type="term" value="C:mitochondrial matrix"/>
    <property type="evidence" value="ECO:0000314"/>
    <property type="project" value="ParkinsonsUK-UCL"/>
</dbReference>
<dbReference type="GO" id="GO:0005739">
    <property type="term" value="C:mitochondrion"/>
    <property type="evidence" value="ECO:0000314"/>
    <property type="project" value="UniProtKB"/>
</dbReference>
<dbReference type="GO" id="GO:0043005">
    <property type="term" value="C:neuron projection"/>
    <property type="evidence" value="ECO:0000314"/>
    <property type="project" value="ParkinsonsUK-UCL"/>
</dbReference>
<dbReference type="GO" id="GO:0005634">
    <property type="term" value="C:nucleus"/>
    <property type="evidence" value="ECO:0000314"/>
    <property type="project" value="MGI"/>
</dbReference>
<dbReference type="GO" id="GO:0048471">
    <property type="term" value="C:perinuclear region of cytoplasm"/>
    <property type="evidence" value="ECO:0007669"/>
    <property type="project" value="Ensembl"/>
</dbReference>
<dbReference type="GO" id="GO:0005886">
    <property type="term" value="C:plasma membrane"/>
    <property type="evidence" value="ECO:0007669"/>
    <property type="project" value="UniProtKB-SubCell"/>
</dbReference>
<dbReference type="GO" id="GO:0016605">
    <property type="term" value="C:PML body"/>
    <property type="evidence" value="ECO:0007669"/>
    <property type="project" value="Ensembl"/>
</dbReference>
<dbReference type="GO" id="GO:0008021">
    <property type="term" value="C:synaptic vesicle"/>
    <property type="evidence" value="ECO:0000314"/>
    <property type="project" value="SynGO"/>
</dbReference>
<dbReference type="GO" id="GO:0005507">
    <property type="term" value="F:copper ion binding"/>
    <property type="evidence" value="ECO:0000250"/>
    <property type="project" value="UniProtKB"/>
</dbReference>
<dbReference type="GO" id="GO:1903135">
    <property type="term" value="F:cupric ion binding"/>
    <property type="evidence" value="ECO:0007669"/>
    <property type="project" value="Ensembl"/>
</dbReference>
<dbReference type="GO" id="GO:1903136">
    <property type="term" value="F:cuprous ion binding"/>
    <property type="evidence" value="ECO:0007669"/>
    <property type="project" value="Ensembl"/>
</dbReference>
<dbReference type="GO" id="GO:0019955">
    <property type="term" value="F:cytokine binding"/>
    <property type="evidence" value="ECO:0007669"/>
    <property type="project" value="Ensembl"/>
</dbReference>
<dbReference type="GO" id="GO:1990422">
    <property type="term" value="F:glyoxalase (glycolic acid-forming) activity"/>
    <property type="evidence" value="ECO:0000250"/>
    <property type="project" value="UniProtKB"/>
</dbReference>
<dbReference type="GO" id="GO:0019900">
    <property type="term" value="F:kinase binding"/>
    <property type="evidence" value="ECO:0007669"/>
    <property type="project" value="Ensembl"/>
</dbReference>
<dbReference type="GO" id="GO:0036478">
    <property type="term" value="F:L-dopa decarboxylase activator activity"/>
    <property type="evidence" value="ECO:0007669"/>
    <property type="project" value="Ensembl"/>
</dbReference>
<dbReference type="GO" id="GO:0045340">
    <property type="term" value="F:mercury ion binding"/>
    <property type="evidence" value="ECO:0000250"/>
    <property type="project" value="UniProtKB"/>
</dbReference>
<dbReference type="GO" id="GO:0003729">
    <property type="term" value="F:mRNA binding"/>
    <property type="evidence" value="ECO:0000250"/>
    <property type="project" value="UniProtKB"/>
</dbReference>
<dbReference type="GO" id="GO:0050681">
    <property type="term" value="F:nuclear androgen receptor binding"/>
    <property type="evidence" value="ECO:0007669"/>
    <property type="project" value="Ensembl"/>
</dbReference>
<dbReference type="GO" id="GO:0019826">
    <property type="term" value="F:oxygen sensor activity"/>
    <property type="evidence" value="ECO:0000315"/>
    <property type="project" value="ParkinsonsUK-UCL"/>
</dbReference>
<dbReference type="GO" id="GO:0008233">
    <property type="term" value="F:peptidase activity"/>
    <property type="evidence" value="ECO:0000250"/>
    <property type="project" value="UniProtKB"/>
</dbReference>
<dbReference type="GO" id="GO:0030414">
    <property type="term" value="F:peptidase inhibitor activity"/>
    <property type="evidence" value="ECO:0007669"/>
    <property type="project" value="Ensembl"/>
</dbReference>
<dbReference type="GO" id="GO:0051920">
    <property type="term" value="F:peroxiredoxin activity"/>
    <property type="evidence" value="ECO:0000315"/>
    <property type="project" value="MGI"/>
</dbReference>
<dbReference type="GO" id="GO:0036524">
    <property type="term" value="F:protein deglycase activity"/>
    <property type="evidence" value="ECO:0000250"/>
    <property type="project" value="UniProtKB"/>
</dbReference>
<dbReference type="GO" id="GO:0042803">
    <property type="term" value="F:protein homodimerization activity"/>
    <property type="evidence" value="ECO:0000250"/>
    <property type="project" value="UniProtKB"/>
</dbReference>
<dbReference type="GO" id="GO:0003723">
    <property type="term" value="F:RNA binding"/>
    <property type="evidence" value="ECO:0000304"/>
    <property type="project" value="MGI"/>
</dbReference>
<dbReference type="GO" id="GO:0097110">
    <property type="term" value="F:scaffold protein binding"/>
    <property type="evidence" value="ECO:0007669"/>
    <property type="project" value="Ensembl"/>
</dbReference>
<dbReference type="GO" id="GO:0030546">
    <property type="term" value="F:signaling receptor activator activity"/>
    <property type="evidence" value="ECO:0007669"/>
    <property type="project" value="Ensembl"/>
</dbReference>
<dbReference type="GO" id="GO:0005102">
    <property type="term" value="F:signaling receptor binding"/>
    <property type="evidence" value="ECO:0007669"/>
    <property type="project" value="Ensembl"/>
</dbReference>
<dbReference type="GO" id="GO:0044388">
    <property type="term" value="F:small protein activating enzyme binding"/>
    <property type="evidence" value="ECO:0007669"/>
    <property type="project" value="Ensembl"/>
</dbReference>
<dbReference type="GO" id="GO:0016532">
    <property type="term" value="F:superoxide dismutase copper chaperone activity"/>
    <property type="evidence" value="ECO:0007669"/>
    <property type="project" value="Ensembl"/>
</dbReference>
<dbReference type="GO" id="GO:0003713">
    <property type="term" value="F:transcription coactivator activity"/>
    <property type="evidence" value="ECO:0007669"/>
    <property type="project" value="Ensembl"/>
</dbReference>
<dbReference type="GO" id="GO:0036470">
    <property type="term" value="F:tyrosine 3-monooxygenase activator activity"/>
    <property type="evidence" value="ECO:0007669"/>
    <property type="project" value="Ensembl"/>
</dbReference>
<dbReference type="GO" id="GO:0044390">
    <property type="term" value="F:ubiquitin-like protein conjugating enzyme binding"/>
    <property type="evidence" value="ECO:0007669"/>
    <property type="project" value="Ensembl"/>
</dbReference>
<dbReference type="GO" id="GO:0055105">
    <property type="term" value="F:ubiquitin-protein transferase inhibitor activity"/>
    <property type="evidence" value="ECO:0000250"/>
    <property type="project" value="ParkinsonsUK-UCL"/>
</dbReference>
<dbReference type="GO" id="GO:1990381">
    <property type="term" value="F:ubiquitin-specific protease binding"/>
    <property type="evidence" value="ECO:0007669"/>
    <property type="project" value="Ensembl"/>
</dbReference>
<dbReference type="GO" id="GO:0008344">
    <property type="term" value="P:adult locomotory behavior"/>
    <property type="evidence" value="ECO:0000315"/>
    <property type="project" value="MGI"/>
</dbReference>
<dbReference type="GO" id="GO:0030521">
    <property type="term" value="P:androgen receptor signaling pathway"/>
    <property type="evidence" value="ECO:0007669"/>
    <property type="project" value="Ensembl"/>
</dbReference>
<dbReference type="GO" id="GO:0006914">
    <property type="term" value="P:autophagy"/>
    <property type="evidence" value="ECO:0007669"/>
    <property type="project" value="UniProtKB-KW"/>
</dbReference>
<dbReference type="GO" id="GO:0110095">
    <property type="term" value="P:cellular detoxification of aldehyde"/>
    <property type="evidence" value="ECO:0000250"/>
    <property type="project" value="UniProtKB"/>
</dbReference>
<dbReference type="GO" id="GO:0140041">
    <property type="term" value="P:cellular detoxification of methylglyoxal"/>
    <property type="evidence" value="ECO:0000250"/>
    <property type="project" value="UniProtKB"/>
</dbReference>
<dbReference type="GO" id="GO:0036471">
    <property type="term" value="P:cellular response to glyoxal"/>
    <property type="evidence" value="ECO:0000315"/>
    <property type="project" value="ParkinsonsUK-UCL"/>
</dbReference>
<dbReference type="GO" id="GO:0070301">
    <property type="term" value="P:cellular response to hydrogen peroxide"/>
    <property type="evidence" value="ECO:0007669"/>
    <property type="project" value="Ensembl"/>
</dbReference>
<dbReference type="GO" id="GO:0034599">
    <property type="term" value="P:cellular response to oxidative stress"/>
    <property type="evidence" value="ECO:0000315"/>
    <property type="project" value="UniProtKB"/>
</dbReference>
<dbReference type="GO" id="GO:0034614">
    <property type="term" value="P:cellular response to reactive oxygen species"/>
    <property type="evidence" value="ECO:0000315"/>
    <property type="project" value="MGI"/>
</dbReference>
<dbReference type="GO" id="GO:0070994">
    <property type="term" value="P:detection of oxidative stress"/>
    <property type="evidence" value="ECO:0000315"/>
    <property type="project" value="ParkinsonsUK-UCL"/>
</dbReference>
<dbReference type="GO" id="GO:0010273">
    <property type="term" value="P:detoxification of copper ion"/>
    <property type="evidence" value="ECO:0000315"/>
    <property type="project" value="UniProtKB"/>
</dbReference>
<dbReference type="GO" id="GO:0061691">
    <property type="term" value="P:detoxification of hydrogen peroxide"/>
    <property type="evidence" value="ECO:0007669"/>
    <property type="project" value="Ensembl"/>
</dbReference>
<dbReference type="GO" id="GO:0050787">
    <property type="term" value="P:detoxification of mercury ion"/>
    <property type="evidence" value="ECO:0000315"/>
    <property type="project" value="UniProtKB"/>
</dbReference>
<dbReference type="GO" id="GO:0006281">
    <property type="term" value="P:DNA repair"/>
    <property type="evidence" value="ECO:0000250"/>
    <property type="project" value="UniProtKB"/>
</dbReference>
<dbReference type="GO" id="GO:0051583">
    <property type="term" value="P:dopamine uptake involved in synaptic transmission"/>
    <property type="evidence" value="ECO:0000315"/>
    <property type="project" value="MGI"/>
</dbReference>
<dbReference type="GO" id="GO:0042593">
    <property type="term" value="P:glucose homeostasis"/>
    <property type="evidence" value="ECO:0000315"/>
    <property type="project" value="UniProtKB"/>
</dbReference>
<dbReference type="GO" id="GO:0046295">
    <property type="term" value="P:glycolate biosynthetic process"/>
    <property type="evidence" value="ECO:0000314"/>
    <property type="project" value="ParkinsonsUK-UCL"/>
</dbReference>
<dbReference type="GO" id="GO:1903189">
    <property type="term" value="P:glyoxal metabolic process"/>
    <property type="evidence" value="ECO:0000314"/>
    <property type="project" value="ParkinsonsUK-UCL"/>
</dbReference>
<dbReference type="GO" id="GO:0106044">
    <property type="term" value="P:guanine deglycation"/>
    <property type="evidence" value="ECO:0000250"/>
    <property type="project" value="UniProtKB"/>
</dbReference>
<dbReference type="GO" id="GO:0106046">
    <property type="term" value="P:guanine deglycation, glyoxal removal"/>
    <property type="evidence" value="ECO:0000250"/>
    <property type="project" value="UniProtKB"/>
</dbReference>
<dbReference type="GO" id="GO:0106045">
    <property type="term" value="P:guanine deglycation, methylglyoxal removal"/>
    <property type="evidence" value="ECO:0000250"/>
    <property type="project" value="UniProtKB"/>
</dbReference>
<dbReference type="GO" id="GO:0042743">
    <property type="term" value="P:hydrogen peroxide metabolic process"/>
    <property type="evidence" value="ECO:0000315"/>
    <property type="project" value="MGI"/>
</dbReference>
<dbReference type="GO" id="GO:0006954">
    <property type="term" value="P:inflammatory response"/>
    <property type="evidence" value="ECO:0007669"/>
    <property type="project" value="UniProtKB-KW"/>
</dbReference>
<dbReference type="GO" id="GO:0030073">
    <property type="term" value="P:insulin secretion"/>
    <property type="evidence" value="ECO:0000315"/>
    <property type="project" value="UniProtKB"/>
</dbReference>
<dbReference type="GO" id="GO:0019249">
    <property type="term" value="P:lactate biosynthetic process"/>
    <property type="evidence" value="ECO:0007669"/>
    <property type="project" value="Ensembl"/>
</dbReference>
<dbReference type="GO" id="GO:0051899">
    <property type="term" value="P:membrane depolarization"/>
    <property type="evidence" value="ECO:0000315"/>
    <property type="project" value="MGI"/>
</dbReference>
<dbReference type="GO" id="GO:0060081">
    <property type="term" value="P:membrane hyperpolarization"/>
    <property type="evidence" value="ECO:0000315"/>
    <property type="project" value="MGI"/>
</dbReference>
<dbReference type="GO" id="GO:0061727">
    <property type="term" value="P:methylglyoxal catabolic process to lactate"/>
    <property type="evidence" value="ECO:0000250"/>
    <property type="project" value="UniProtKB"/>
</dbReference>
<dbReference type="GO" id="GO:0007005">
    <property type="term" value="P:mitochondrion organization"/>
    <property type="evidence" value="ECO:0000315"/>
    <property type="project" value="UniProtKB"/>
</dbReference>
<dbReference type="GO" id="GO:1903073">
    <property type="term" value="P:negative regulation of death-inducing signaling complex assembly"/>
    <property type="evidence" value="ECO:0007669"/>
    <property type="project" value="Ensembl"/>
</dbReference>
<dbReference type="GO" id="GO:1902236">
    <property type="term" value="P:negative regulation of endoplasmic reticulum stress-induced intrinsic apoptotic signaling pathway"/>
    <property type="evidence" value="ECO:0000315"/>
    <property type="project" value="ParkinsonsUK-UCL"/>
</dbReference>
<dbReference type="GO" id="GO:0010629">
    <property type="term" value="P:negative regulation of gene expression"/>
    <property type="evidence" value="ECO:0007669"/>
    <property type="project" value="Ensembl"/>
</dbReference>
<dbReference type="GO" id="GO:1903384">
    <property type="term" value="P:negative regulation of hydrogen peroxide-induced neuron intrinsic apoptotic signaling pathway"/>
    <property type="evidence" value="ECO:0000315"/>
    <property type="project" value="ParkinsonsUK-UCL"/>
</dbReference>
<dbReference type="GO" id="GO:1903751">
    <property type="term" value="P:negative regulation of intrinsic apoptotic signaling pathway in response to hydrogen peroxide"/>
    <property type="evidence" value="ECO:0000315"/>
    <property type="project" value="ParkinsonsUK-UCL"/>
</dbReference>
<dbReference type="GO" id="GO:1905259">
    <property type="term" value="P:negative regulation of nitrosative stress-induced intrinsic apoptotic signaling pathway"/>
    <property type="evidence" value="ECO:0007669"/>
    <property type="project" value="Ensembl"/>
</dbReference>
<dbReference type="GO" id="GO:1902176">
    <property type="term" value="P:negative regulation of oxidative stress-induced intrinsic apoptotic signaling pathway"/>
    <property type="evidence" value="ECO:0000315"/>
    <property type="project" value="ParkinsonsUK-UCL"/>
</dbReference>
<dbReference type="GO" id="GO:1903377">
    <property type="term" value="P:negative regulation of oxidative stress-induced neuron intrinsic apoptotic signaling pathway"/>
    <property type="evidence" value="ECO:0000315"/>
    <property type="project" value="ParkinsonsUK-UCL"/>
</dbReference>
<dbReference type="GO" id="GO:0032435">
    <property type="term" value="P:negative regulation of proteasomal ubiquitin-dependent protein catabolic process"/>
    <property type="evidence" value="ECO:0007669"/>
    <property type="project" value="Ensembl"/>
</dbReference>
<dbReference type="GO" id="GO:0042177">
    <property type="term" value="P:negative regulation of protein catabolic process"/>
    <property type="evidence" value="ECO:0000315"/>
    <property type="project" value="ParkinsonsUK-UCL"/>
</dbReference>
<dbReference type="GO" id="GO:0046826">
    <property type="term" value="P:negative regulation of protein export from nucleus"/>
    <property type="evidence" value="ECO:0007669"/>
    <property type="project" value="Ensembl"/>
</dbReference>
<dbReference type="GO" id="GO:1903094">
    <property type="term" value="P:negative regulation of protein K48-linked deubiquitination"/>
    <property type="evidence" value="ECO:0007669"/>
    <property type="project" value="Ensembl"/>
</dbReference>
<dbReference type="GO" id="GO:0033234">
    <property type="term" value="P:negative regulation of protein sumoylation"/>
    <property type="evidence" value="ECO:0007669"/>
    <property type="project" value="Ensembl"/>
</dbReference>
<dbReference type="GO" id="GO:0031397">
    <property type="term" value="P:negative regulation of protein ubiquitination"/>
    <property type="evidence" value="ECO:0000315"/>
    <property type="project" value="ParkinsonsUK-UCL"/>
</dbReference>
<dbReference type="GO" id="GO:1903427">
    <property type="term" value="P:negative regulation of reactive oxygen species biosynthetic process"/>
    <property type="evidence" value="ECO:0000315"/>
    <property type="project" value="UniProtKB"/>
</dbReference>
<dbReference type="GO" id="GO:1903122">
    <property type="term" value="P:negative regulation of TRAIL-activated apoptotic signaling pathway"/>
    <property type="evidence" value="ECO:0007669"/>
    <property type="project" value="Ensembl"/>
</dbReference>
<dbReference type="GO" id="GO:0002866">
    <property type="term" value="P:positive regulation of acute inflammatory response to antigenic stimulus"/>
    <property type="evidence" value="ECO:0000315"/>
    <property type="project" value="UniProtKB"/>
</dbReference>
<dbReference type="GO" id="GO:1903181">
    <property type="term" value="P:positive regulation of dopamine biosynthetic process"/>
    <property type="evidence" value="ECO:0007669"/>
    <property type="project" value="Ensembl"/>
</dbReference>
<dbReference type="GO" id="GO:0010628">
    <property type="term" value="P:positive regulation of gene expression"/>
    <property type="evidence" value="ECO:0000315"/>
    <property type="project" value="ParkinsonsUK-UCL"/>
</dbReference>
<dbReference type="GO" id="GO:0032757">
    <property type="term" value="P:positive regulation of interleukin-8 production"/>
    <property type="evidence" value="ECO:0007669"/>
    <property type="project" value="Ensembl"/>
</dbReference>
<dbReference type="GO" id="GO:1903197">
    <property type="term" value="P:positive regulation of L-dopa biosynthetic process"/>
    <property type="evidence" value="ECO:0007669"/>
    <property type="project" value="Ensembl"/>
</dbReference>
<dbReference type="GO" id="GO:1902958">
    <property type="term" value="P:positive regulation of mitochondrial electron transport, NADH to ubiquinone"/>
    <property type="evidence" value="ECO:0000315"/>
    <property type="project" value="ParkinsonsUK-UCL"/>
</dbReference>
<dbReference type="GO" id="GO:0033864">
    <property type="term" value="P:positive regulation of NAD(P)H oxidase activity"/>
    <property type="evidence" value="ECO:0000315"/>
    <property type="project" value="UniProtKB"/>
</dbReference>
<dbReference type="GO" id="GO:2000277">
    <property type="term" value="P:positive regulation of oxidative phosphorylation uncoupler activity"/>
    <property type="evidence" value="ECO:0000315"/>
    <property type="project" value="UniProtKB"/>
</dbReference>
<dbReference type="GO" id="GO:1902177">
    <property type="term" value="P:positive regulation of oxidative stress-induced intrinsic apoptotic signaling pathway"/>
    <property type="evidence" value="ECO:0000315"/>
    <property type="project" value="MGI"/>
</dbReference>
<dbReference type="GO" id="GO:0051897">
    <property type="term" value="P:positive regulation of phosphatidylinositol 3-kinase/protein kinase B signal transduction"/>
    <property type="evidence" value="ECO:0007669"/>
    <property type="project" value="Ensembl"/>
</dbReference>
<dbReference type="GO" id="GO:1900182">
    <property type="term" value="P:positive regulation of protein localization to nucleus"/>
    <property type="evidence" value="ECO:0007669"/>
    <property type="project" value="Ensembl"/>
</dbReference>
<dbReference type="GO" id="GO:0031334">
    <property type="term" value="P:positive regulation of protein-containing complex assembly"/>
    <property type="evidence" value="ECO:0007669"/>
    <property type="project" value="Ensembl"/>
</dbReference>
<dbReference type="GO" id="GO:1903428">
    <property type="term" value="P:positive regulation of reactive oxygen species biosynthetic process"/>
    <property type="evidence" value="ECO:0000314"/>
    <property type="project" value="MGI"/>
</dbReference>
<dbReference type="GO" id="GO:0045944">
    <property type="term" value="P:positive regulation of transcription by RNA polymerase II"/>
    <property type="evidence" value="ECO:0000315"/>
    <property type="project" value="ParkinsonsUK-UCL"/>
</dbReference>
<dbReference type="GO" id="GO:0030091">
    <property type="term" value="P:protein repair"/>
    <property type="evidence" value="ECO:0007669"/>
    <property type="project" value="Ensembl"/>
</dbReference>
<dbReference type="GO" id="GO:0050821">
    <property type="term" value="P:protein stabilization"/>
    <property type="evidence" value="ECO:0000315"/>
    <property type="project" value="UniProtKB"/>
</dbReference>
<dbReference type="GO" id="GO:0006508">
    <property type="term" value="P:proteolysis"/>
    <property type="evidence" value="ECO:0007669"/>
    <property type="project" value="UniProtKB-KW"/>
</dbReference>
<dbReference type="GO" id="GO:0060765">
    <property type="term" value="P:regulation of androgen receptor signaling pathway"/>
    <property type="evidence" value="ECO:0007669"/>
    <property type="project" value="Ensembl"/>
</dbReference>
<dbReference type="GO" id="GO:0050727">
    <property type="term" value="P:regulation of inflammatory response"/>
    <property type="evidence" value="ECO:0000315"/>
    <property type="project" value="UniProtKB"/>
</dbReference>
<dbReference type="GO" id="GO:0051881">
    <property type="term" value="P:regulation of mitochondrial membrane potential"/>
    <property type="evidence" value="ECO:0007669"/>
    <property type="project" value="Ensembl"/>
</dbReference>
<dbReference type="GO" id="GO:0043523">
    <property type="term" value="P:regulation of neuron apoptotic process"/>
    <property type="evidence" value="ECO:0000250"/>
    <property type="project" value="UniProtKB"/>
</dbReference>
<dbReference type="GO" id="GO:1900242">
    <property type="term" value="P:regulation of synaptic vesicle endocytosis"/>
    <property type="evidence" value="ECO:0000314"/>
    <property type="project" value="SynGO"/>
</dbReference>
<dbReference type="GO" id="GO:0019430">
    <property type="term" value="P:removal of superoxide radicals"/>
    <property type="evidence" value="ECO:0007669"/>
    <property type="project" value="Ensembl"/>
</dbReference>
<dbReference type="GO" id="GO:0042542">
    <property type="term" value="P:response to hydrogen peroxide"/>
    <property type="evidence" value="ECO:0000314"/>
    <property type="project" value="MGI"/>
</dbReference>
<dbReference type="GO" id="GO:0006979">
    <property type="term" value="P:response to oxidative stress"/>
    <property type="evidence" value="ECO:0000315"/>
    <property type="project" value="UniProtKB"/>
</dbReference>
<dbReference type="GO" id="GO:0007338">
    <property type="term" value="P:single fertilization"/>
    <property type="evidence" value="ECO:0007669"/>
    <property type="project" value="UniProtKB-KW"/>
</dbReference>
<dbReference type="GO" id="GO:0001963">
    <property type="term" value="P:synaptic transmission, dopaminergic"/>
    <property type="evidence" value="ECO:0000315"/>
    <property type="project" value="MGI"/>
</dbReference>
<dbReference type="CDD" id="cd03135">
    <property type="entry name" value="GATase1_DJ-1"/>
    <property type="match status" value="1"/>
</dbReference>
<dbReference type="FunFam" id="3.40.50.880:FF:000046">
    <property type="entry name" value="Protein/nucleic acid deglycase DJ-1"/>
    <property type="match status" value="1"/>
</dbReference>
<dbReference type="Gene3D" id="3.40.50.880">
    <property type="match status" value="1"/>
</dbReference>
<dbReference type="InterPro" id="IPR029062">
    <property type="entry name" value="Class_I_gatase-like"/>
</dbReference>
<dbReference type="InterPro" id="IPR006287">
    <property type="entry name" value="DJ-1"/>
</dbReference>
<dbReference type="InterPro" id="IPR002818">
    <property type="entry name" value="DJ-1/PfpI"/>
</dbReference>
<dbReference type="InterPro" id="IPR050325">
    <property type="entry name" value="Prot/Nucl_acid_deglycase"/>
</dbReference>
<dbReference type="NCBIfam" id="TIGR01383">
    <property type="entry name" value="not_thiJ"/>
    <property type="match status" value="1"/>
</dbReference>
<dbReference type="PANTHER" id="PTHR48094:SF12">
    <property type="entry name" value="PARKINSON DISEASE PROTEIN 7 HOMOLOG"/>
    <property type="match status" value="1"/>
</dbReference>
<dbReference type="PANTHER" id="PTHR48094">
    <property type="entry name" value="PROTEIN/NUCLEIC ACID DEGLYCASE DJ-1-RELATED"/>
    <property type="match status" value="1"/>
</dbReference>
<dbReference type="Pfam" id="PF01965">
    <property type="entry name" value="DJ-1_PfpI"/>
    <property type="match status" value="1"/>
</dbReference>
<dbReference type="SUPFAM" id="SSF52317">
    <property type="entry name" value="Class I glutamine amidotransferase-like"/>
    <property type="match status" value="1"/>
</dbReference>
<organism>
    <name type="scientific">Mus musculus</name>
    <name type="common">Mouse</name>
    <dbReference type="NCBI Taxonomy" id="10090"/>
    <lineage>
        <taxon>Eukaryota</taxon>
        <taxon>Metazoa</taxon>
        <taxon>Chordata</taxon>
        <taxon>Craniata</taxon>
        <taxon>Vertebrata</taxon>
        <taxon>Euteleostomi</taxon>
        <taxon>Mammalia</taxon>
        <taxon>Eutheria</taxon>
        <taxon>Euarchontoglires</taxon>
        <taxon>Glires</taxon>
        <taxon>Rodentia</taxon>
        <taxon>Myomorpha</taxon>
        <taxon>Muroidea</taxon>
        <taxon>Muridae</taxon>
        <taxon>Murinae</taxon>
        <taxon>Mus</taxon>
        <taxon>Mus</taxon>
    </lineage>
</organism>
<evidence type="ECO:0000250" key="1">
    <source>
        <dbReference type="UniProtKB" id="Q99497"/>
    </source>
</evidence>
<evidence type="ECO:0000269" key="2">
    <source>
    </source>
</evidence>
<evidence type="ECO:0000269" key="3">
    <source>
    </source>
</evidence>
<evidence type="ECO:0000269" key="4">
    <source>
    </source>
</evidence>
<evidence type="ECO:0000269" key="5">
    <source>
    </source>
</evidence>
<evidence type="ECO:0000269" key="6">
    <source>
    </source>
</evidence>
<evidence type="ECO:0000269" key="7">
    <source>
    </source>
</evidence>
<evidence type="ECO:0000269" key="8">
    <source>
    </source>
</evidence>
<evidence type="ECO:0000269" key="9">
    <source>
    </source>
</evidence>
<evidence type="ECO:0000269" key="10">
    <source>
    </source>
</evidence>
<evidence type="ECO:0000269" key="11">
    <source>
    </source>
</evidence>
<evidence type="ECO:0000269" key="12">
    <source>
    </source>
</evidence>
<evidence type="ECO:0000269" key="13">
    <source>
    </source>
</evidence>
<evidence type="ECO:0000269" key="14">
    <source>
    </source>
</evidence>
<evidence type="ECO:0000269" key="15">
    <source>
    </source>
</evidence>
<evidence type="ECO:0000269" key="16">
    <source>
    </source>
</evidence>
<evidence type="ECO:0000269" key="17">
    <source>
    </source>
</evidence>
<evidence type="ECO:0000269" key="18">
    <source>
    </source>
</evidence>
<evidence type="ECO:0000305" key="19"/>
<evidence type="ECO:0000312" key="20">
    <source>
        <dbReference type="MGI" id="MGI:2135637"/>
    </source>
</evidence>
<evidence type="ECO:0007744" key="21">
    <source>
    </source>
</evidence>
<reference key="1">
    <citation type="journal article" date="2001" name="Gene">
        <title>Molecular cloning of human and mouse DJ-1 genes and identification of Sp1-dependent activation of the human DJ-1 promoter.</title>
        <authorList>
            <person name="Taira T."/>
            <person name="Takahashi K."/>
            <person name="Kitagawa R."/>
            <person name="Iguchi-Ariga S.M.M."/>
            <person name="Ariga H."/>
        </authorList>
    </citation>
    <scope>NUCLEOTIDE SEQUENCE [MRNA]</scope>
    <source>
        <tissue>Kidney</tissue>
    </source>
</reference>
<reference key="2">
    <citation type="journal article" date="2005" name="Science">
        <title>The transcriptional landscape of the mammalian genome.</title>
        <authorList>
            <person name="Carninci P."/>
            <person name="Kasukawa T."/>
            <person name="Katayama S."/>
            <person name="Gough J."/>
            <person name="Frith M.C."/>
            <person name="Maeda N."/>
            <person name="Oyama R."/>
            <person name="Ravasi T."/>
            <person name="Lenhard B."/>
            <person name="Wells C."/>
            <person name="Kodzius R."/>
            <person name="Shimokawa K."/>
            <person name="Bajic V.B."/>
            <person name="Brenner S.E."/>
            <person name="Batalov S."/>
            <person name="Forrest A.R."/>
            <person name="Zavolan M."/>
            <person name="Davis M.J."/>
            <person name="Wilming L.G."/>
            <person name="Aidinis V."/>
            <person name="Allen J.E."/>
            <person name="Ambesi-Impiombato A."/>
            <person name="Apweiler R."/>
            <person name="Aturaliya R.N."/>
            <person name="Bailey T.L."/>
            <person name="Bansal M."/>
            <person name="Baxter L."/>
            <person name="Beisel K.W."/>
            <person name="Bersano T."/>
            <person name="Bono H."/>
            <person name="Chalk A.M."/>
            <person name="Chiu K.P."/>
            <person name="Choudhary V."/>
            <person name="Christoffels A."/>
            <person name="Clutterbuck D.R."/>
            <person name="Crowe M.L."/>
            <person name="Dalla E."/>
            <person name="Dalrymple B.P."/>
            <person name="de Bono B."/>
            <person name="Della Gatta G."/>
            <person name="di Bernardo D."/>
            <person name="Down T."/>
            <person name="Engstrom P."/>
            <person name="Fagiolini M."/>
            <person name="Faulkner G."/>
            <person name="Fletcher C.F."/>
            <person name="Fukushima T."/>
            <person name="Furuno M."/>
            <person name="Futaki S."/>
            <person name="Gariboldi M."/>
            <person name="Georgii-Hemming P."/>
            <person name="Gingeras T.R."/>
            <person name="Gojobori T."/>
            <person name="Green R.E."/>
            <person name="Gustincich S."/>
            <person name="Harbers M."/>
            <person name="Hayashi Y."/>
            <person name="Hensch T.K."/>
            <person name="Hirokawa N."/>
            <person name="Hill D."/>
            <person name="Huminiecki L."/>
            <person name="Iacono M."/>
            <person name="Ikeo K."/>
            <person name="Iwama A."/>
            <person name="Ishikawa T."/>
            <person name="Jakt M."/>
            <person name="Kanapin A."/>
            <person name="Katoh M."/>
            <person name="Kawasawa Y."/>
            <person name="Kelso J."/>
            <person name="Kitamura H."/>
            <person name="Kitano H."/>
            <person name="Kollias G."/>
            <person name="Krishnan S.P."/>
            <person name="Kruger A."/>
            <person name="Kummerfeld S.K."/>
            <person name="Kurochkin I.V."/>
            <person name="Lareau L.F."/>
            <person name="Lazarevic D."/>
            <person name="Lipovich L."/>
            <person name="Liu J."/>
            <person name="Liuni S."/>
            <person name="McWilliam S."/>
            <person name="Madan Babu M."/>
            <person name="Madera M."/>
            <person name="Marchionni L."/>
            <person name="Matsuda H."/>
            <person name="Matsuzawa S."/>
            <person name="Miki H."/>
            <person name="Mignone F."/>
            <person name="Miyake S."/>
            <person name="Morris K."/>
            <person name="Mottagui-Tabar S."/>
            <person name="Mulder N."/>
            <person name="Nakano N."/>
            <person name="Nakauchi H."/>
            <person name="Ng P."/>
            <person name="Nilsson R."/>
            <person name="Nishiguchi S."/>
            <person name="Nishikawa S."/>
            <person name="Nori F."/>
            <person name="Ohara O."/>
            <person name="Okazaki Y."/>
            <person name="Orlando V."/>
            <person name="Pang K.C."/>
            <person name="Pavan W.J."/>
            <person name="Pavesi G."/>
            <person name="Pesole G."/>
            <person name="Petrovsky N."/>
            <person name="Piazza S."/>
            <person name="Reed J."/>
            <person name="Reid J.F."/>
            <person name="Ring B.Z."/>
            <person name="Ringwald M."/>
            <person name="Rost B."/>
            <person name="Ruan Y."/>
            <person name="Salzberg S.L."/>
            <person name="Sandelin A."/>
            <person name="Schneider C."/>
            <person name="Schoenbach C."/>
            <person name="Sekiguchi K."/>
            <person name="Semple C.A."/>
            <person name="Seno S."/>
            <person name="Sessa L."/>
            <person name="Sheng Y."/>
            <person name="Shibata Y."/>
            <person name="Shimada H."/>
            <person name="Shimada K."/>
            <person name="Silva D."/>
            <person name="Sinclair B."/>
            <person name="Sperling S."/>
            <person name="Stupka E."/>
            <person name="Sugiura K."/>
            <person name="Sultana R."/>
            <person name="Takenaka Y."/>
            <person name="Taki K."/>
            <person name="Tammoja K."/>
            <person name="Tan S.L."/>
            <person name="Tang S."/>
            <person name="Taylor M.S."/>
            <person name="Tegner J."/>
            <person name="Teichmann S.A."/>
            <person name="Ueda H.R."/>
            <person name="van Nimwegen E."/>
            <person name="Verardo R."/>
            <person name="Wei C.L."/>
            <person name="Yagi K."/>
            <person name="Yamanishi H."/>
            <person name="Zabarovsky E."/>
            <person name="Zhu S."/>
            <person name="Zimmer A."/>
            <person name="Hide W."/>
            <person name="Bult C."/>
            <person name="Grimmond S.M."/>
            <person name="Teasdale R.D."/>
            <person name="Liu E.T."/>
            <person name="Brusic V."/>
            <person name="Quackenbush J."/>
            <person name="Wahlestedt C."/>
            <person name="Mattick J.S."/>
            <person name="Hume D.A."/>
            <person name="Kai C."/>
            <person name="Sasaki D."/>
            <person name="Tomaru Y."/>
            <person name="Fukuda S."/>
            <person name="Kanamori-Katayama M."/>
            <person name="Suzuki M."/>
            <person name="Aoki J."/>
            <person name="Arakawa T."/>
            <person name="Iida J."/>
            <person name="Imamura K."/>
            <person name="Itoh M."/>
            <person name="Kato T."/>
            <person name="Kawaji H."/>
            <person name="Kawagashira N."/>
            <person name="Kawashima T."/>
            <person name="Kojima M."/>
            <person name="Kondo S."/>
            <person name="Konno H."/>
            <person name="Nakano K."/>
            <person name="Ninomiya N."/>
            <person name="Nishio T."/>
            <person name="Okada M."/>
            <person name="Plessy C."/>
            <person name="Shibata K."/>
            <person name="Shiraki T."/>
            <person name="Suzuki S."/>
            <person name="Tagami M."/>
            <person name="Waki K."/>
            <person name="Watahiki A."/>
            <person name="Okamura-Oho Y."/>
            <person name="Suzuki H."/>
            <person name="Kawai J."/>
            <person name="Hayashizaki Y."/>
        </authorList>
    </citation>
    <scope>NUCLEOTIDE SEQUENCE [LARGE SCALE MRNA]</scope>
    <source>
        <strain>BALB/cJ</strain>
        <strain>NOD</strain>
        <tissue>Thymus</tissue>
    </source>
</reference>
<reference key="3">
    <citation type="journal article" date="2009" name="PLoS Biol.">
        <title>Lineage-specific biology revealed by a finished genome assembly of the mouse.</title>
        <authorList>
            <person name="Church D.M."/>
            <person name="Goodstadt L."/>
            <person name="Hillier L.W."/>
            <person name="Zody M.C."/>
            <person name="Goldstein S."/>
            <person name="She X."/>
            <person name="Bult C.J."/>
            <person name="Agarwala R."/>
            <person name="Cherry J.L."/>
            <person name="DiCuccio M."/>
            <person name="Hlavina W."/>
            <person name="Kapustin Y."/>
            <person name="Meric P."/>
            <person name="Maglott D."/>
            <person name="Birtle Z."/>
            <person name="Marques A.C."/>
            <person name="Graves T."/>
            <person name="Zhou S."/>
            <person name="Teague B."/>
            <person name="Potamousis K."/>
            <person name="Churas C."/>
            <person name="Place M."/>
            <person name="Herschleb J."/>
            <person name="Runnheim R."/>
            <person name="Forrest D."/>
            <person name="Amos-Landgraf J."/>
            <person name="Schwartz D.C."/>
            <person name="Cheng Z."/>
            <person name="Lindblad-Toh K."/>
            <person name="Eichler E.E."/>
            <person name="Ponting C.P."/>
        </authorList>
    </citation>
    <scope>NUCLEOTIDE SEQUENCE [LARGE SCALE GENOMIC DNA]</scope>
    <source>
        <strain>C57BL/6J</strain>
    </source>
</reference>
<reference key="4">
    <citation type="journal article" date="2004" name="Genome Res.">
        <title>The status, quality, and expansion of the NIH full-length cDNA project: the Mammalian Gene Collection (MGC).</title>
        <authorList>
            <consortium name="The MGC Project Team"/>
        </authorList>
    </citation>
    <scope>NUCLEOTIDE SEQUENCE [LARGE SCALE MRNA]</scope>
    <source>
        <strain>FVB/N</strain>
        <tissue>Mammary tumor</tissue>
    </source>
</reference>
<reference key="5">
    <citation type="submission" date="2007-03" db="UniProtKB">
        <authorList>
            <person name="Lubec G."/>
            <person name="Klug S."/>
        </authorList>
    </citation>
    <scope>PROTEIN SEQUENCE OF 13-27; 63-89 AND 99-122</scope>
    <scope>IDENTIFICATION BY MASS SPECTROMETRY</scope>
    <source>
        <tissue>Hippocampus</tissue>
    </source>
</reference>
<reference key="6">
    <citation type="journal article" date="2004" name="EMBO Rep.">
        <title>DJ-1 has a role in antioxidative stress to prevent cell death.</title>
        <authorList>
            <person name="Taira T."/>
            <person name="Saito Y."/>
            <person name="Niki T."/>
            <person name="Iguchi-Ariga S.M."/>
            <person name="Takahashi K."/>
            <person name="Ariga H."/>
        </authorList>
    </citation>
    <scope>INDUCTION</scope>
</reference>
<reference key="7">
    <citation type="journal article" date="2005" name="Proc. Natl. Acad. Sci. U.S.A.">
        <title>Hypersensitivity of DJ-1-deficient mice to 1-methyl-4-phenyl-1,2,3,6-tetrahydropyrindine (MPTP) and oxidative stress.</title>
        <authorList>
            <person name="Kim R.H."/>
            <person name="Smith P.D."/>
            <person name="Aleyasin H."/>
            <person name="Hayley S."/>
            <person name="Mount M.P."/>
            <person name="Pownall S."/>
            <person name="Wakeham A."/>
            <person name="You-Ten A.J."/>
            <person name="Kalia S.K."/>
            <person name="Horne P."/>
            <person name="Westaway D."/>
            <person name="Lozano A.M."/>
            <person name="Anisman H."/>
            <person name="Park D.S."/>
            <person name="Mak T.W."/>
        </authorList>
    </citation>
    <scope>FUNCTION</scope>
    <scope>DISRUPTION PHENOTYPE</scope>
</reference>
<reference key="8">
    <citation type="journal article" date="2006" name="Proc. Natl. Acad. Sci. U.S.A.">
        <title>DJ-1, a cancer- and Parkinson's disease-associated protein, stabilizes the antioxidant transcriptional master regulator Nrf2.</title>
        <authorList>
            <person name="Clements C.M."/>
            <person name="McNally R.S."/>
            <person name="Conti B.J."/>
            <person name="Mak T.W."/>
            <person name="Ting J.P."/>
        </authorList>
    </citation>
    <scope>FUNCTION</scope>
    <scope>DISRUPTION PHENOTYPE</scope>
</reference>
<reference key="9">
    <citation type="journal article" date="2007" name="Proc. Natl. Acad. Sci. U.S.A.">
        <title>DJ-1 gene deletion reveals that DJ-1 is an atypical peroxiredoxin-like peroxidase.</title>
        <authorList>
            <person name="Andres-Mateos E."/>
            <person name="Perier C."/>
            <person name="Zhang L."/>
            <person name="Blanchard-Fillion B."/>
            <person name="Greco T.M."/>
            <person name="Thomas B."/>
            <person name="Ko H.S."/>
            <person name="Sasaki M."/>
            <person name="Ischiropoulos H."/>
            <person name="Przedborski S."/>
            <person name="Dawson T.M."/>
            <person name="Dawson V.L."/>
        </authorList>
    </citation>
    <scope>FUNCTION</scope>
    <scope>DISRUPTION PHENOTYPE</scope>
    <scope>MUTAGENESIS OF CYS-46; CYS-53 AND CYS-106</scope>
</reference>
<reference key="10">
    <citation type="journal article" date="2009" name="FASEB J.">
        <title>Regulation of astrocyte inflammatory responses by the Parkinson's disease-associated gene DJ-1.</title>
        <authorList>
            <person name="Waak J."/>
            <person name="Weber S.S."/>
            <person name="Waldenmaier A."/>
            <person name="Gorner K."/>
            <person name="Alunni-Fabbroni M."/>
            <person name="Schell H."/>
            <person name="Vogt-Weisenhorn D."/>
            <person name="Pham T.T."/>
            <person name="Reumers V."/>
            <person name="Baekelandt V."/>
            <person name="Wurst W."/>
            <person name="Kahle P.J."/>
        </authorList>
    </citation>
    <scope>FUNCTION</scope>
</reference>
<reference key="11">
    <citation type="journal article" date="2010" name="Blood Cells Mol. Dis.">
        <title>The familial Parkinson's disease gene DJ-1 (PARK7) is expressed in red cells and plays a role in protection against oxidative damage.</title>
        <authorList>
            <person name="Xu X."/>
            <person name="Martin F."/>
            <person name="Friedman J.S."/>
        </authorList>
    </citation>
    <scope>FUNCTION</scope>
    <scope>TISSUE SPECIFICITY</scope>
    <scope>DEVELOPMENTAL STAGE</scope>
</reference>
<reference key="12">
    <citation type="journal article" date="2010" name="Cell">
        <title>A tissue-specific atlas of mouse protein phosphorylation and expression.</title>
        <authorList>
            <person name="Huttlin E.L."/>
            <person name="Jedrychowski M.P."/>
            <person name="Elias J.E."/>
            <person name="Goswami T."/>
            <person name="Rad R."/>
            <person name="Beausoleil S.A."/>
            <person name="Villen J."/>
            <person name="Haas W."/>
            <person name="Sowa M.E."/>
            <person name="Gygi S.P."/>
        </authorList>
    </citation>
    <scope>IDENTIFICATION BY MASS SPECTROMETRY [LARGE SCALE ANALYSIS]</scope>
    <source>
        <tissue>Brain</tissue>
        <tissue>Brown adipose tissue</tissue>
        <tissue>Heart</tissue>
        <tissue>Kidney</tissue>
        <tissue>Liver</tissue>
        <tissue>Lung</tissue>
        <tissue>Pancreas</tissue>
        <tissue>Spleen</tissue>
        <tissue>Testis</tissue>
    </source>
</reference>
<reference key="13">
    <citation type="journal article" date="2011" name="J. Biol. Chem.">
        <title>DJ-1 enhances cell survival through the binding of cezanne, a negative regulator of NF-{kappa}B.</title>
        <authorList>
            <person name="McNally R.S."/>
            <person name="Davis B.K."/>
            <person name="Clements C.M."/>
            <person name="Accavitti-Loper M.A."/>
            <person name="Mak T.W."/>
            <person name="Ting J.P."/>
        </authorList>
    </citation>
    <scope>INTERACTION WITH BBS1; CLCF1; MTERF AND OTUD7B</scope>
</reference>
<reference key="14">
    <citation type="journal article" date="2010" name="Nature">
        <title>Oxidant stress evoked by pacemaking in dopaminergic neurons is attenuated by DJ-1.</title>
        <authorList>
            <person name="Guzman J.N."/>
            <person name="Sanchez-Padilla J."/>
            <person name="Wokosin D."/>
            <person name="Kondapalli J."/>
            <person name="Ilijic E."/>
            <person name="Schumacker P.T."/>
            <person name="Surmeier D.J."/>
        </authorList>
    </citation>
    <scope>FUNCTION</scope>
    <scope>DISRUPTION PHENOTYPE</scope>
</reference>
<reference key="15">
    <citation type="journal article" date="2010" name="PLoS ONE">
        <title>Reduced basal autophagy and impaired mitochondrial dynamics due to loss of Parkinson's disease-associated protein DJ-1.</title>
        <authorList>
            <person name="Krebiehl G."/>
            <person name="Ruckerbauer S."/>
            <person name="Burbulla L.F."/>
            <person name="Kieper N."/>
            <person name="Maurer B."/>
            <person name="Waak J."/>
            <person name="Wolburg H."/>
            <person name="Gizatullina Z."/>
            <person name="Gellerich F.N."/>
            <person name="Woitalla D."/>
            <person name="Riess O."/>
            <person name="Kahle P.J."/>
            <person name="Proikas-Cezanne T."/>
            <person name="Kruger R."/>
        </authorList>
    </citation>
    <scope>FUNCTION</scope>
    <scope>DISRUPTION PHENOTYPE</scope>
</reference>
<reference key="16">
    <citation type="journal article" date="2012" name="Cell Death Differ.">
        <title>The caspase 6 derived N-terminal fragment of DJ-1 promotes apoptosis via increased ROS production.</title>
        <authorList>
            <person name="Robert G."/>
            <person name="Puissant A."/>
            <person name="Dufies M."/>
            <person name="Marchetti S."/>
            <person name="Jacquel A."/>
            <person name="Cluzeau T."/>
            <person name="Colosetti P."/>
            <person name="Belhacene N."/>
            <person name="Kahle P."/>
            <person name="Da Costa C.A."/>
            <person name="Luciano F."/>
            <person name="Checler F."/>
            <person name="Auberger P."/>
        </authorList>
    </citation>
    <scope>PROTEOLYTIC CLEAVAGE</scope>
    <scope>SUBCELLULAR LOCATION</scope>
</reference>
<reference key="17">
    <citation type="journal article" date="2012" name="Hum. Mol. Genet.">
        <title>Human DJ-1 and its homologs are novel glyoxalases.</title>
        <authorList>
            <person name="Lee J.Y."/>
            <person name="Song J."/>
            <person name="Kwon K."/>
            <person name="Jang S."/>
            <person name="Kim C."/>
            <person name="Baek K."/>
            <person name="Kim J."/>
            <person name="Park C."/>
        </authorList>
    </citation>
    <scope>FUNCTION</scope>
    <scope>CAUTION</scope>
</reference>
<reference key="18">
    <citation type="journal article" date="2012" name="J. Mol. Cell Biol.">
        <title>Age- and diet-dependent requirement of DJ-1 for glucose homeostasis in mice with implications for human type 2 diabetes.</title>
        <authorList>
            <person name="Jain D."/>
            <person name="Jain R."/>
            <person name="Eberhard D."/>
            <person name="Eglinger J."/>
            <person name="Bugliani M."/>
            <person name="Piemonti L."/>
            <person name="Marchetti P."/>
            <person name="Lammert E."/>
        </authorList>
    </citation>
    <scope>FUNCTION</scope>
    <scope>DEVELOPMENTAL STAGE</scope>
    <scope>TISSUE SPECIFICITY</scope>
    <scope>DISRUPTION PHENOTYPE</scope>
</reference>
<reference key="19">
    <citation type="journal article" date="2013" name="Hum. Mol. Genet.">
        <title>DJ-1 associates with lipid rafts by palmitoylation and regulates lipid rafts-dependent endocytosis in astrocytes.</title>
        <authorList>
            <person name="Kim K.S."/>
            <person name="Kim J.S."/>
            <person name="Park J.Y."/>
            <person name="Suh Y.H."/>
            <person name="Jou I."/>
            <person name="Joe E.H."/>
            <person name="Park S.M."/>
        </authorList>
    </citation>
    <scope>FUNCTION</scope>
    <scope>SUBCELLULAR LOCATION</scope>
    <scope>DISRUPTION PHENOTYPE</scope>
</reference>
<reference key="20">
    <citation type="journal article" date="2013" name="J. Biol. Chem.">
        <title>Parkinson disease protein DJ-1 binds metals and protects against metal-induced cytotoxicity.</title>
        <authorList>
            <person name="Bjorkblom B."/>
            <person name="Adilbayeva A."/>
            <person name="Maple-Grodem J."/>
            <person name="Piston D."/>
            <person name="Okvist M."/>
            <person name="Xu X.M."/>
            <person name="Brede C."/>
            <person name="Larsen J.P."/>
            <person name="Moller S.G."/>
        </authorList>
    </citation>
    <scope>FUNCTION</scope>
</reference>
<reference key="21">
    <citation type="journal article" date="2013" name="Mol. Cell">
        <title>SIRT5-mediated lysine desuccinylation impacts diverse metabolic pathways.</title>
        <authorList>
            <person name="Park J."/>
            <person name="Chen Y."/>
            <person name="Tishkoff D.X."/>
            <person name="Peng C."/>
            <person name="Tan M."/>
            <person name="Dai L."/>
            <person name="Xie Z."/>
            <person name="Zhang Y."/>
            <person name="Zwaans B.M."/>
            <person name="Skinner M.E."/>
            <person name="Lombard D.B."/>
            <person name="Zhao Y."/>
        </authorList>
    </citation>
    <scope>ACETYLATION [LARGE SCALE ANALYSIS] AT LYS-148</scope>
    <scope>SUCCINYLATION [LARGE SCALE ANALYSIS] AT LYS-182</scope>
    <scope>IDENTIFICATION BY MASS SPECTROMETRY [LARGE SCALE ANALYSIS]</scope>
    <source>
        <tissue>Embryonic fibroblast</tissue>
    </source>
</reference>
<reference key="22">
    <citation type="journal article" date="2015" name="Cell Res.">
        <title>Park7 interacts with p47(phox) to direct NADPH oxidase-dependent ROS production and protect against sepsis.</title>
        <authorList>
            <person name="Liu W."/>
            <person name="Wu H."/>
            <person name="Chen L."/>
            <person name="Wen Y."/>
            <person name="Kong X."/>
            <person name="Gao W.Q."/>
        </authorList>
    </citation>
    <scope>FUNCTION</scope>
    <scope>DISRUPTION PHENOTYPE</scope>
    <scope>INTERACTION WITH NCF1</scope>
</reference>
<reference key="23">
    <citation type="journal article" date="2015" name="PLoS ONE">
        <title>DJ-1 Protects Pancreatic Beta Cells from Cytokine- and Streptozotocin-Mediated Cell Death.</title>
        <authorList>
            <person name="Jain D."/>
            <person name="Weber G."/>
            <person name="Eberhard D."/>
            <person name="Mehana A.E."/>
            <person name="Eglinger J."/>
            <person name="Welters A."/>
            <person name="Bartosinska B."/>
            <person name="Jeruschke K."/>
            <person name="Weiss J."/>
            <person name="Paeth G."/>
            <person name="Ariga H."/>
            <person name="Seufert J."/>
            <person name="Lammert E."/>
        </authorList>
    </citation>
    <scope>FUNCTION</scope>
    <scope>DISRUPTION PHENOTYPE</scope>
</reference>
<reference key="24">
    <citation type="journal article" date="2019" name="IScience">
        <title>Rewiring of the Human Mitochondrial Interactome during Neuronal Reprogramming Reveals Regulators of the Respirasome and Neurogenesis.</title>
        <authorList>
            <person name="Moutaoufik M.T."/>
            <person name="Malty R."/>
            <person name="Amin S."/>
            <person name="Zhang Q."/>
            <person name="Phanse S."/>
            <person name="Gagarinova A."/>
            <person name="Zilocchi M."/>
            <person name="Hoell L."/>
            <person name="Minic Z."/>
            <person name="Gagarinova M."/>
            <person name="Aoki H."/>
            <person name="Stockwell J."/>
            <person name="Jessulat M."/>
            <person name="Goebels F."/>
            <person name="Broderick K."/>
            <person name="Scott N.E."/>
            <person name="Vlasblom J."/>
            <person name="Musso G."/>
            <person name="Prasad B."/>
            <person name="Lamantea E."/>
            <person name="Garavaglia B."/>
            <person name="Rajput A."/>
            <person name="Murayama K."/>
            <person name="Okazaki Y."/>
            <person name="Foster L.J."/>
            <person name="Bader G.D."/>
            <person name="Cayabyab F.S."/>
            <person name="Babu M."/>
        </authorList>
    </citation>
    <scope>INTERACTION WITH NENF</scope>
    <scope>SUBCELLULAR LOCATION</scope>
</reference>
<keyword id="KW-0007">Acetylation</keyword>
<keyword id="KW-0072">Autophagy</keyword>
<keyword id="KW-1003">Cell membrane</keyword>
<keyword id="KW-0143">Chaperone</keyword>
<keyword id="KW-0186">Copper</keyword>
<keyword id="KW-0963">Cytoplasm</keyword>
<keyword id="KW-0903">Direct protein sequencing</keyword>
<keyword id="KW-0227">DNA damage</keyword>
<keyword id="KW-0234">DNA repair</keyword>
<keyword id="KW-0256">Endoplasmic reticulum</keyword>
<keyword id="KW-0278">Fertilization</keyword>
<keyword id="KW-0378">Hydrolase</keyword>
<keyword id="KW-0395">Inflammatory response</keyword>
<keyword id="KW-1017">Isopeptide bond</keyword>
<keyword id="KW-0449">Lipoprotein</keyword>
<keyword id="KW-0472">Membrane</keyword>
<keyword id="KW-0496">Mitochondrion</keyword>
<keyword id="KW-0539">Nucleus</keyword>
<keyword id="KW-0558">Oxidation</keyword>
<keyword id="KW-0564">Palmitate</keyword>
<keyword id="KW-0597">Phosphoprotein</keyword>
<keyword id="KW-0645">Protease</keyword>
<keyword id="KW-1185">Reference proteome</keyword>
<keyword id="KW-0694">RNA-binding</keyword>
<keyword id="KW-0346">Stress response</keyword>
<keyword id="KW-0043">Tumor suppressor</keyword>
<keyword id="KW-0832">Ubl conjugation</keyword>
<keyword id="KW-0865">Zymogen</keyword>
<name>PARK7_MOUSE</name>
<accession>Q99LX0</accession>
<accession>O88306</accession>
<accession>Q3THB9</accession>
<accession>Q3U509</accession>
<comment type="function">
    <text evidence="1 3 4 5 6 7 8 9 11 13 14 15 16 17">Multifunctional protein with controversial molecular function which plays an important role in cell protection against oxidative stress and cell death acting as oxidative stress sensor and redox-sensitive chaperone and protease (PubMed:15784737, PubMed:17015834, PubMed:20800516, PubMed:21068725). It is involved in neuroprotective mechanisms like the stabilization of NFE2L2 and PINK1 proteins, male fertility as a positive regulator of androgen signaling pathway as well as cell growth and transformation through, for instance, the modulation of NF-kappa-B signaling pathway (PubMed:17015834, PubMed:21097510). Has been described as a protein and nucleotide deglycase that catalyzes the deglycation of the Maillard adducts formed between amino groups of proteins or nucleotides and reactive carbonyl groups of glyoxals. But this function is rebuted by other works. As a protein deglycase, repairs methylglyoxal- and glyoxal-glycated proteins, and releases repaired proteins and lactate or glycolate, respectively. Deglycates cysteine, arginine and lysine residues in proteins, and thus reactivates these proteins by reversing glycation by glyoxals. Acts on early glycation intermediates (hemithioacetals and aminocarbinols), preventing the formation of advanced glycation endproducts (AGE) that cause irreversible damage. Also functions as a nucleotide deglycase able to repair glycated guanine in the free nucleotide pool (GTP, GDP, GMP, dGTP) and in DNA and RNA. Is thus involved in a major nucleotide repair system named guanine glycation repair (GG repair), dedicated to reversing methylglyoxal and glyoxal damage via nucleotide sanitization and direct nucleic acid repair. Protects histones from adduction by methylglyoxal, controls the levels of methylglyoxal-derived argininine modifications on chromatin. Able to remove the glycations and restore histone 3, histone glycation disrupts both local and global chromatin architecture by altering histone-DNA interactions as well as histone acetylation and ubiquitination levels. Displays a very low glyoxalase activity that may reflect its deglycase activity (PubMed:22523093). Eliminates hydrogen peroxide and protects cells against hydrogen peroxide-induced cell death (PubMed:17766438). Required for correct mitochondrial morphology and function as well as for autophagy of dysfunctional mitochondria (PubMed:20186336). Plays a role in regulating expression or stability of the mitochondrial uncoupling proteins SLC25A14 and SLC25A27 in dopaminergic neurons of the substantia nigra pars compacta and attenuates the oxidative stress induced by calcium entry into the neurons via L-type channels during pacemaking (PubMed:21068725). Regulates astrocyte inflammatory responses, may modulate lipid rafts-dependent endocytosis in astrocytes and neuronal cells (PubMed:19276172, PubMed:23847046). In pancreatic islets, involved in the maintenance of mitochondrial reactive oxygen species (ROS) levels and glucose homeostasis in an age- and diet dependent manner. Protects pancreatic beta cells from cell death induced by inflammatory and cytotoxic setting (PubMed:26422139). Binds to a number of mRNAs containing multiple copies of GG or CC motifs and partially inhibits their translation but dissociates following oxidative stress (By similarity). Metal-binding protein able to bind copper as well as toxic mercury ions, enhances the cell protection mechanism against induced metal toxicity (PubMed:23792957). In macrophages, interacts with the NADPH oxidase subunit NCF1 to direct NADPH oxidase-dependent ROS production, and protects against sepsis (PubMed:26021615).</text>
</comment>
<comment type="catalytic activity">
    <reaction evidence="1">
        <text>N(omega)-(1-hydroxy-2-oxopropyl)-L-arginyl-[protein] + H2O = lactate + L-arginyl-[protein] + H(+)</text>
        <dbReference type="Rhea" id="RHEA:49548"/>
        <dbReference type="Rhea" id="RHEA-COMP:10532"/>
        <dbReference type="Rhea" id="RHEA-COMP:12428"/>
        <dbReference type="ChEBI" id="CHEBI:15377"/>
        <dbReference type="ChEBI" id="CHEBI:15378"/>
        <dbReference type="ChEBI" id="CHEBI:24996"/>
        <dbReference type="ChEBI" id="CHEBI:29965"/>
        <dbReference type="ChEBI" id="CHEBI:131708"/>
        <dbReference type="EC" id="3.5.1.124"/>
    </reaction>
</comment>
<comment type="catalytic activity">
    <reaction evidence="1">
        <text>N(6)-(1-hydroxy-2-oxopropyl)-L-lysyl-[protein] + H2O = lactate + L-lysyl-[protein] + H(+)</text>
        <dbReference type="Rhea" id="RHEA:49552"/>
        <dbReference type="Rhea" id="RHEA-COMP:9752"/>
        <dbReference type="Rhea" id="RHEA-COMP:12429"/>
        <dbReference type="ChEBI" id="CHEBI:15377"/>
        <dbReference type="ChEBI" id="CHEBI:15378"/>
        <dbReference type="ChEBI" id="CHEBI:24996"/>
        <dbReference type="ChEBI" id="CHEBI:29969"/>
        <dbReference type="ChEBI" id="CHEBI:131709"/>
        <dbReference type="EC" id="3.5.1.124"/>
    </reaction>
</comment>
<comment type="catalytic activity">
    <reaction evidence="1">
        <text>S-(1-hydroxy-2-oxopropyl)-L-cysteinyl-[protein] + H2O = lactate + L-cysteinyl-[protein] + H(+)</text>
        <dbReference type="Rhea" id="RHEA:49556"/>
        <dbReference type="Rhea" id="RHEA-COMP:10131"/>
        <dbReference type="Rhea" id="RHEA-COMP:12430"/>
        <dbReference type="ChEBI" id="CHEBI:15377"/>
        <dbReference type="ChEBI" id="CHEBI:15378"/>
        <dbReference type="ChEBI" id="CHEBI:24996"/>
        <dbReference type="ChEBI" id="CHEBI:29950"/>
        <dbReference type="ChEBI" id="CHEBI:131710"/>
        <dbReference type="EC" id="3.5.1.124"/>
    </reaction>
</comment>
<comment type="catalytic activity">
    <reaction evidence="1">
        <text>N(omega)-(1-hydroxy-2-oxoethyl)-L-arginyl-[protein] + H2O = L-arginyl-[protein] + glycolate + H(+)</text>
        <dbReference type="Rhea" id="RHEA:57188"/>
        <dbReference type="Rhea" id="RHEA-COMP:10532"/>
        <dbReference type="Rhea" id="RHEA-COMP:14844"/>
        <dbReference type="ChEBI" id="CHEBI:15377"/>
        <dbReference type="ChEBI" id="CHEBI:15378"/>
        <dbReference type="ChEBI" id="CHEBI:29805"/>
        <dbReference type="ChEBI" id="CHEBI:29965"/>
        <dbReference type="ChEBI" id="CHEBI:141553"/>
        <dbReference type="EC" id="3.5.1.124"/>
    </reaction>
</comment>
<comment type="catalytic activity">
    <reaction evidence="1">
        <text>N(6)-(1-hydroxy-2-oxoethyl)-L-lysyl-[protein] + H2O = glycolate + L-lysyl-[protein] + H(+)</text>
        <dbReference type="Rhea" id="RHEA:57192"/>
        <dbReference type="Rhea" id="RHEA-COMP:9752"/>
        <dbReference type="Rhea" id="RHEA-COMP:14845"/>
        <dbReference type="ChEBI" id="CHEBI:15377"/>
        <dbReference type="ChEBI" id="CHEBI:15378"/>
        <dbReference type="ChEBI" id="CHEBI:29805"/>
        <dbReference type="ChEBI" id="CHEBI:29969"/>
        <dbReference type="ChEBI" id="CHEBI:141554"/>
        <dbReference type="EC" id="3.5.1.124"/>
    </reaction>
</comment>
<comment type="catalytic activity">
    <reaction evidence="1">
        <text>S-(1-hydroxy-2-oxoethyl)-L-cysteinyl-[protein] + H2O = glycolate + L-cysteinyl-[protein] + H(+)</text>
        <dbReference type="Rhea" id="RHEA:57196"/>
        <dbReference type="Rhea" id="RHEA-COMP:10131"/>
        <dbReference type="Rhea" id="RHEA-COMP:14846"/>
        <dbReference type="ChEBI" id="CHEBI:15377"/>
        <dbReference type="ChEBI" id="CHEBI:15378"/>
        <dbReference type="ChEBI" id="CHEBI:29805"/>
        <dbReference type="ChEBI" id="CHEBI:29950"/>
        <dbReference type="ChEBI" id="CHEBI:141555"/>
        <dbReference type="EC" id="3.5.1.124"/>
    </reaction>
</comment>
<comment type="catalytic activity">
    <reaction evidence="1">
        <text>N(2)-(1-hydroxy-2-oxopropyl)-dGTP + H2O = lactate + dGTP + H(+)</text>
        <dbReference type="Rhea" id="RHEA:57244"/>
        <dbReference type="ChEBI" id="CHEBI:15377"/>
        <dbReference type="ChEBI" id="CHEBI:15378"/>
        <dbReference type="ChEBI" id="CHEBI:24996"/>
        <dbReference type="ChEBI" id="CHEBI:61429"/>
        <dbReference type="ChEBI" id="CHEBI:141569"/>
    </reaction>
</comment>
<comment type="catalytic activity">
    <reaction evidence="1">
        <text>N(2)-(1-hydroxy-2-oxopropyl)-GTP + H2O = lactate + GTP + H(+)</text>
        <dbReference type="Rhea" id="RHEA:57256"/>
        <dbReference type="ChEBI" id="CHEBI:15377"/>
        <dbReference type="ChEBI" id="CHEBI:15378"/>
        <dbReference type="ChEBI" id="CHEBI:24996"/>
        <dbReference type="ChEBI" id="CHEBI:37565"/>
        <dbReference type="ChEBI" id="CHEBI:141570"/>
    </reaction>
</comment>
<comment type="catalytic activity">
    <reaction evidence="1">
        <text>N(2)-(1-hydroxy-2-oxopropyl)-GDP + H2O = lactate + GDP + H(+)</text>
        <dbReference type="Rhea" id="RHEA:57260"/>
        <dbReference type="ChEBI" id="CHEBI:15377"/>
        <dbReference type="ChEBI" id="CHEBI:15378"/>
        <dbReference type="ChEBI" id="CHEBI:24996"/>
        <dbReference type="ChEBI" id="CHEBI:58189"/>
        <dbReference type="ChEBI" id="CHEBI:141573"/>
    </reaction>
</comment>
<comment type="catalytic activity">
    <reaction evidence="1">
        <text>N(2)-(1-hydroxy-2-oxopropyl)-GMP + H2O = lactate + GMP + H(+)</text>
        <dbReference type="Rhea" id="RHEA:57268"/>
        <dbReference type="ChEBI" id="CHEBI:15377"/>
        <dbReference type="ChEBI" id="CHEBI:15378"/>
        <dbReference type="ChEBI" id="CHEBI:24996"/>
        <dbReference type="ChEBI" id="CHEBI:58115"/>
        <dbReference type="ChEBI" id="CHEBI:141575"/>
    </reaction>
</comment>
<comment type="catalytic activity">
    <reaction evidence="1">
        <text>N(2)-(1-hydroxy-2-oxoethyl)-dGTP + H2O = dGTP + glycolate + H(+)</text>
        <dbReference type="Rhea" id="RHEA:57248"/>
        <dbReference type="ChEBI" id="CHEBI:15377"/>
        <dbReference type="ChEBI" id="CHEBI:15378"/>
        <dbReference type="ChEBI" id="CHEBI:29805"/>
        <dbReference type="ChEBI" id="CHEBI:61429"/>
        <dbReference type="ChEBI" id="CHEBI:141572"/>
    </reaction>
</comment>
<comment type="catalytic activity">
    <reaction evidence="1">
        <text>N(2)-(1-hydroxy-2-oxoethyl)-GTP + H2O = glycolate + GTP + H(+)</text>
        <dbReference type="Rhea" id="RHEA:57252"/>
        <dbReference type="ChEBI" id="CHEBI:15377"/>
        <dbReference type="ChEBI" id="CHEBI:15378"/>
        <dbReference type="ChEBI" id="CHEBI:29805"/>
        <dbReference type="ChEBI" id="CHEBI:37565"/>
        <dbReference type="ChEBI" id="CHEBI:141571"/>
    </reaction>
</comment>
<comment type="catalytic activity">
    <reaction evidence="1">
        <text>N(2)-(1-hydroxy-2-oxoethyl)-GDP + H2O = glycolate + GDP + H(+)</text>
        <dbReference type="Rhea" id="RHEA:57264"/>
        <dbReference type="ChEBI" id="CHEBI:15377"/>
        <dbReference type="ChEBI" id="CHEBI:15378"/>
        <dbReference type="ChEBI" id="CHEBI:29805"/>
        <dbReference type="ChEBI" id="CHEBI:58189"/>
        <dbReference type="ChEBI" id="CHEBI:141574"/>
    </reaction>
</comment>
<comment type="catalytic activity">
    <reaction evidence="1">
        <text>N(2)-(1-hydroxy-2-oxoethyl)-GMP + H2O = glycolate + GMP + H(+)</text>
        <dbReference type="Rhea" id="RHEA:57304"/>
        <dbReference type="ChEBI" id="CHEBI:15377"/>
        <dbReference type="ChEBI" id="CHEBI:15378"/>
        <dbReference type="ChEBI" id="CHEBI:29805"/>
        <dbReference type="ChEBI" id="CHEBI:58115"/>
        <dbReference type="ChEBI" id="CHEBI:141576"/>
    </reaction>
</comment>
<comment type="catalytic activity">
    <reaction evidence="1">
        <text>an N(2)-(1-hydroxy-2-oxopropyl)-guanosine in RNA + H2O = a guanosine in RNA + lactate + H(+)</text>
        <dbReference type="Rhea" id="RHEA:57288"/>
        <dbReference type="Rhea" id="RHEA-COMP:14855"/>
        <dbReference type="Rhea" id="RHEA-COMP:14858"/>
        <dbReference type="ChEBI" id="CHEBI:15377"/>
        <dbReference type="ChEBI" id="CHEBI:15378"/>
        <dbReference type="ChEBI" id="CHEBI:24996"/>
        <dbReference type="ChEBI" id="CHEBI:74269"/>
        <dbReference type="ChEBI" id="CHEBI:141580"/>
    </reaction>
</comment>
<comment type="catalytic activity">
    <reaction evidence="1">
        <text>an N(2)-(1-hydroxy-2-oxopropyl)-2'-deoxyguanosine in DNA + H2O = a 2'-deoxyguanosine in DNA + lactate + H(+)</text>
        <dbReference type="Rhea" id="RHEA:57300"/>
        <dbReference type="Rhea" id="RHEA-COMP:11367"/>
        <dbReference type="Rhea" id="RHEA-COMP:14856"/>
        <dbReference type="ChEBI" id="CHEBI:15377"/>
        <dbReference type="ChEBI" id="CHEBI:15378"/>
        <dbReference type="ChEBI" id="CHEBI:24996"/>
        <dbReference type="ChEBI" id="CHEBI:85445"/>
        <dbReference type="ChEBI" id="CHEBI:141578"/>
    </reaction>
</comment>
<comment type="catalytic activity">
    <reaction evidence="1">
        <text>an N(2)-(1-hydroxy-2-oxoethyl)-guanosine in RNA + H2O = a guanosine in RNA + glycolate + H(+)</text>
        <dbReference type="Rhea" id="RHEA:57292"/>
        <dbReference type="Rhea" id="RHEA-COMP:14855"/>
        <dbReference type="Rhea" id="RHEA-COMP:14859"/>
        <dbReference type="ChEBI" id="CHEBI:15377"/>
        <dbReference type="ChEBI" id="CHEBI:15378"/>
        <dbReference type="ChEBI" id="CHEBI:29805"/>
        <dbReference type="ChEBI" id="CHEBI:74269"/>
        <dbReference type="ChEBI" id="CHEBI:141581"/>
    </reaction>
</comment>
<comment type="catalytic activity">
    <reaction evidence="1">
        <text>an N(2)-(1-hydroxy-2-oxoethyl)-2'-deoxyguanosine in DNA + H2O = a 2'-deoxyguanosine in DNA + glycolate + H(+)</text>
        <dbReference type="Rhea" id="RHEA:57296"/>
        <dbReference type="Rhea" id="RHEA-COMP:11367"/>
        <dbReference type="Rhea" id="RHEA-COMP:14857"/>
        <dbReference type="ChEBI" id="CHEBI:15377"/>
        <dbReference type="ChEBI" id="CHEBI:15378"/>
        <dbReference type="ChEBI" id="CHEBI:29805"/>
        <dbReference type="ChEBI" id="CHEBI:85445"/>
        <dbReference type="ChEBI" id="CHEBI:141579"/>
    </reaction>
</comment>
<comment type="cofactor">
    <text evidence="1">Deglycase activity does not require glutathione as a cofactor, however, glycated glutathione constitutes a PARK7 substrate.</text>
</comment>
<comment type="subunit">
    <text evidence="1 10 16 18">Homodimer. Binds EFCAB6/DJBP and PIAS2. Part of a ternary complex containing PARK7, EFCAB6/DJBP and AR. Binds to HIPK1 (By similarity). Interacts (via N-terminus) with OTUD7B (PubMed:21097510). Interacts with BBS1, CLCF1 and MTERF (PubMed:21097510). Interacts (via C-terminus) with NCF1; the interaction is enhanced by LPS and modulates NCF1 phosphorylation and membrane translocation (PubMed:26021615). Interacts with NENF (PubMed:31536960).</text>
</comment>
<comment type="subcellular location">
    <subcellularLocation>
        <location evidence="15">Cell membrane</location>
        <topology evidence="15">Lipid-anchor</topology>
    </subcellularLocation>
    <subcellularLocation>
        <location evidence="12">Cytoplasm</location>
    </subcellularLocation>
    <subcellularLocation>
        <location evidence="15">Membrane raft</location>
    </subcellularLocation>
    <subcellularLocation>
        <location evidence="12">Nucleus</location>
    </subcellularLocation>
    <subcellularLocation>
        <location evidence="18">Mitochondrion</location>
    </subcellularLocation>
    <subcellularLocation>
        <location evidence="18">Endoplasmic reticulum</location>
    </subcellularLocation>
    <text evidence="1 15">Under normal conditions, located predominantly in the cytoplasm and, to a lesser extent, in the nucleus and mitochondrion. Translocates to the mitochondrion and subsequently to the nucleus in response to oxidative stress and exerts an increased cytoprotective effect against oxidative damage (By similarity). Membrane raft localization in astrocytes and neuronal cells requires palmitoylation (PubMed:23847046).</text>
</comment>
<comment type="tissue specificity">
    <text evidence="8 13">Expressed in erythroblasts and in mature red blood cells from peripheral blood (at protein level) (PubMed:20800516). In pancreas, expression is higher in islets than surrounding exocrine tissues (PubMed:22611253).</text>
</comment>
<comment type="developmental stage">
    <text evidence="8 13">Expression increases during erythroid development (at protein level) (PubMed:20800516). In pancreatic islets, expression increases during aging (PubMed:22611253).</text>
</comment>
<comment type="induction">
    <text evidence="2">By hydrogen peroxide.</text>
</comment>
<comment type="PTM">
    <text evidence="1">Sumoylated on Lys-130 by PIAS2 or PIAS4; which is essential for cell-growth promoting activity and transforming activity.</text>
</comment>
<comment type="PTM">
    <text evidence="1">Undergoes cleavage of a C-terminal peptide and subsequent activation of protease activity in response to oxidative stress.</text>
</comment>
<comment type="disruption phenotype">
    <text evidence="3 4 5 7 9 13 15 16 17">Increased sensitivity of embryonic cortical neurons to oxidative stress. Age-dependent increase in mitochondrial hydrogen peroxide production and reduced mitochondrial aconitase activity. Down-regulation of Slc25a14 and Slc25a27, compromised calcium-induced uncoupling and increased oxidation of mitochondrial matrix proteins specifically in the dopaminergic neurons of the substantia nigra pars compacta. Reduced N2el2 protein expression. Impaired mitochondrial function and morphology with reduced autophagy leading to accumulation of defective mitochondria. Targeted knockouts in astrocytes exhibit augmented LPS-induced CRK/p38 phosphorylation and signaling, they don't stimulate TLR4 endocytosis upon LPS stimulation. Knockout animals present increased bacterial burdens, reduced local and systemic inflammation, macrophage paralysis and impaired induction of pro-inflammatory cytokines, such as IL6 and TNF, under the condition of sepsis (PubMed:26021615). Mutants from 12 weeks old, but not younger, show higher levels of reactive oxygen species (ROS) and mitochondrial fragmentation in pancreatic islets. They have lower levels of plasma insulin after glucose challenge, display glucose intolerance and have reduced beta-cell area. Younger mutants kept on a high fat diet also show lower levels of plasma insulin, display glucose intolerance and have reduced beta-cell area (PubMed:22611253). Animals become diabetic upon multiple low doses of streptozotocin with reduced insulin concentrations, higher fasting blood glucose concentrations and higher rates of beta cell apoptosis compared to wild type (PubMed:26422139).</text>
</comment>
<comment type="similarity">
    <text evidence="19">Belongs to the peptidase C56 family.</text>
</comment>
<comment type="caution">
    <text evidence="1 11">Glyoxalase activity has been reported (PubMed:22523093). It may however reflect its deglycase activity.</text>
</comment>
<comment type="caution">
    <text evidence="1">The protein deglycation activity is controversial. It has been ascribed to a TRIS buffer artifact by a publication and as a result of the removal of methylglyoxal by glyoxalase activity that leads to a subsequent decomposition of hemithioacetals and hemianimals due to the shift in equilibrium position by another one. However, biochemical experiments showing that PARK7 is a bona fide deglycase have been performed.</text>
</comment>
<gene>
    <name evidence="20" type="primary">Park7</name>
</gene>
<proteinExistence type="evidence at protein level"/>
<feature type="initiator methionine" description="Removed" evidence="1">
    <location>
        <position position="1"/>
    </location>
</feature>
<feature type="chain" id="PRO_0000157850" description="Parkinson disease protein 7 homolog">
    <location>
        <begin position="2"/>
        <end status="unknown"/>
    </location>
</feature>
<feature type="propeptide" id="PRO_0000405560" description="Removed in mature form">
    <location>
        <begin status="unknown"/>
        <end position="189"/>
    </location>
</feature>
<feature type="active site" description="Nucleophile" evidence="1">
    <location>
        <position position="106"/>
    </location>
</feature>
<feature type="active site" evidence="1">
    <location>
        <position position="126"/>
    </location>
</feature>
<feature type="site" description="Cleavage; by CASP6" evidence="12">
    <location>
        <begin position="149"/>
        <end position="150"/>
    </location>
</feature>
<feature type="modified residue" description="N-acetylalanine" evidence="1">
    <location>
        <position position="2"/>
    </location>
</feature>
<feature type="modified residue" description="Phosphotyrosine" evidence="1">
    <location>
        <position position="67"/>
    </location>
</feature>
<feature type="modified residue" description="Cysteine sulfinic acid (-SO2H); alternate" evidence="1">
    <location>
        <position position="106"/>
    </location>
</feature>
<feature type="modified residue" description="N6-acetyllysine" evidence="21">
    <location>
        <position position="148"/>
    </location>
</feature>
<feature type="modified residue" description="N6-succinyllysine" evidence="21">
    <location>
        <position position="182"/>
    </location>
</feature>
<feature type="lipid moiety-binding region" description="S-palmitoyl cysteine" evidence="1">
    <location>
        <position position="46"/>
    </location>
</feature>
<feature type="lipid moiety-binding region" description="S-palmitoyl cysteine" evidence="1">
    <location>
        <position position="53"/>
    </location>
</feature>
<feature type="lipid moiety-binding region" description="S-palmitoyl cysteine; alternate" evidence="1">
    <location>
        <position position="106"/>
    </location>
</feature>
<feature type="cross-link" description="Glycyl lysine isopeptide (Lys-Gly) (interchain with G-Cter in SUMO)" evidence="1">
    <location>
        <position position="130"/>
    </location>
</feature>
<feature type="mutagenesis site" description="Sulfinic acid detected following treatment with hydrogen peroxide." evidence="5">
    <original>C</original>
    <variation>A</variation>
    <location>
        <position position="46"/>
    </location>
</feature>
<feature type="mutagenesis site" description="Sulfinic acid detected following treatment with hydrogen peroxide." evidence="5">
    <original>C</original>
    <variation>A</variation>
    <location>
        <position position="53"/>
    </location>
</feature>
<feature type="mutagenesis site" description="No sulfinic acid detected following treatment with hydrogen peroxide." evidence="5">
    <original>C</original>
    <variation>A</variation>
    <location>
        <position position="106"/>
    </location>
</feature>
<feature type="sequence conflict" description="In Ref. 2; BAE40278." evidence="19" ref="2">
    <original>P</original>
    <variation>T</variation>
    <location>
        <position position="127"/>
    </location>
</feature>
<sequence length="189" mass="20021">MASKRALVILAKGAEEMETVIPVDVMRRAGIKVTVAGLAGKDPVQCSRDVMICPDTSLEDAKTQGPYDVVVLPGGNLGAQNLSESPMVKEILKEQESRKGLIAAICAGPTALLAHEVGFGCKVTTHPLAKDKMMNGSHYSYSESRVEKDGLILTSRGPGTSFEFALAIVEALVGKDMANQVKAPLVLKD</sequence>
<protein>
    <recommendedName>
        <fullName evidence="19">Parkinson disease protein 7 homolog</fullName>
    </recommendedName>
    <alternativeName>
        <fullName evidence="1">Maillard deglycase</fullName>
    </alternativeName>
    <alternativeName>
        <fullName evidence="1">Parkinsonism-associated deglycase</fullName>
    </alternativeName>
    <alternativeName>
        <fullName evidence="19">Protein DJ-1</fullName>
        <shortName>DJ-1</shortName>
    </alternativeName>
    <alternativeName>
        <fullName evidence="1">Protein/nucleic acid deglycase DJ-1</fullName>
        <ecNumber evidence="1">3.1.2.-</ecNumber>
        <ecNumber evidence="1">3.5.1.-</ecNumber>
        <ecNumber evidence="1">3.5.1.124</ecNumber>
    </alternativeName>
</protein>